<feature type="chain" id="PRO_0000284565" description="DNA-binding protein Mhun_3016">
    <location>
        <begin position="1"/>
        <end position="110"/>
    </location>
</feature>
<name>Y3016_METHJ</name>
<keyword id="KW-0238">DNA-binding</keyword>
<keyword id="KW-1185">Reference proteome</keyword>
<dbReference type="EMBL" id="CP000254">
    <property type="protein sequence ID" value="ABD42703.1"/>
    <property type="molecule type" value="Genomic_DNA"/>
</dbReference>
<dbReference type="RefSeq" id="WP_011449954.1">
    <property type="nucleotide sequence ID" value="NC_007796.1"/>
</dbReference>
<dbReference type="SMR" id="Q2FTJ7"/>
<dbReference type="FunCoup" id="Q2FTJ7">
    <property type="interactions" value="94"/>
</dbReference>
<dbReference type="STRING" id="323259.Mhun_3016"/>
<dbReference type="EnsemblBacteria" id="ABD42703">
    <property type="protein sequence ID" value="ABD42703"/>
    <property type="gene ID" value="Mhun_3016"/>
</dbReference>
<dbReference type="GeneID" id="3922838"/>
<dbReference type="KEGG" id="mhu:Mhun_3016"/>
<dbReference type="eggNOG" id="arCOG04179">
    <property type="taxonomic scope" value="Archaea"/>
</dbReference>
<dbReference type="HOGENOM" id="CLU_122978_3_0_2"/>
<dbReference type="InParanoid" id="Q2FTJ7"/>
<dbReference type="OrthoDB" id="7912at2157"/>
<dbReference type="Proteomes" id="UP000001941">
    <property type="component" value="Chromosome"/>
</dbReference>
<dbReference type="GO" id="GO:0005829">
    <property type="term" value="C:cytosol"/>
    <property type="evidence" value="ECO:0007669"/>
    <property type="project" value="TreeGrafter"/>
</dbReference>
<dbReference type="GO" id="GO:0003677">
    <property type="term" value="F:DNA binding"/>
    <property type="evidence" value="ECO:0007669"/>
    <property type="project" value="UniProtKB-UniRule"/>
</dbReference>
<dbReference type="Gene3D" id="1.10.8.140">
    <property type="entry name" value="PDCD5-like"/>
    <property type="match status" value="1"/>
</dbReference>
<dbReference type="HAMAP" id="MF_00026">
    <property type="entry name" value="dsDNA_bind"/>
    <property type="match status" value="1"/>
</dbReference>
<dbReference type="InterPro" id="IPR022889">
    <property type="entry name" value="DNA_bind_arc"/>
</dbReference>
<dbReference type="InterPro" id="IPR002836">
    <property type="entry name" value="PDCD5-like"/>
</dbReference>
<dbReference type="InterPro" id="IPR036883">
    <property type="entry name" value="PDCD5-like_sf"/>
</dbReference>
<dbReference type="NCBIfam" id="NF003268">
    <property type="entry name" value="PRK04239.1"/>
    <property type="match status" value="1"/>
</dbReference>
<dbReference type="PANTHER" id="PTHR10840">
    <property type="entry name" value="PROGRAMMED CELL DEATH PROTEIN 5"/>
    <property type="match status" value="1"/>
</dbReference>
<dbReference type="PANTHER" id="PTHR10840:SF0">
    <property type="entry name" value="PROGRAMMED CELL DEATH PROTEIN 5"/>
    <property type="match status" value="1"/>
</dbReference>
<dbReference type="Pfam" id="PF01984">
    <property type="entry name" value="dsDNA_bind"/>
    <property type="match status" value="1"/>
</dbReference>
<dbReference type="PIRSF" id="PIRSF015730">
    <property type="entry name" value="TFAR19"/>
    <property type="match status" value="1"/>
</dbReference>
<dbReference type="SUPFAM" id="SSF46950">
    <property type="entry name" value="Double-stranded DNA-binding domain"/>
    <property type="match status" value="1"/>
</dbReference>
<protein>
    <recommendedName>
        <fullName evidence="1">DNA-binding protein Mhun_3016</fullName>
    </recommendedName>
</protein>
<reference key="1">
    <citation type="journal article" date="2016" name="Stand. Genomic Sci.">
        <title>Complete genome sequence of Methanospirillum hungatei type strain JF1.</title>
        <authorList>
            <person name="Gunsalus R.P."/>
            <person name="Cook L.E."/>
            <person name="Crable B."/>
            <person name="Rohlin L."/>
            <person name="McDonald E."/>
            <person name="Mouttaki H."/>
            <person name="Sieber J.R."/>
            <person name="Poweleit N."/>
            <person name="Zhou H."/>
            <person name="Lapidus A.L."/>
            <person name="Daligault H.E."/>
            <person name="Land M."/>
            <person name="Gilna P."/>
            <person name="Ivanova N."/>
            <person name="Kyrpides N."/>
            <person name="Culley D.E."/>
            <person name="McInerney M.J."/>
        </authorList>
    </citation>
    <scope>NUCLEOTIDE SEQUENCE [LARGE SCALE GENOMIC DNA]</scope>
    <source>
        <strain>ATCC 27890 / DSM 864 / NBRC 100397 / JF-1</strain>
    </source>
</reference>
<sequence>MAEDELAEIRRRKMAEMQQHAAMQQQDMERQQQYEAQMQMALMQILEPEARERLNTIKLTKPDFARAVEQQLVMLAQSGRIKNKISDDQLKVILQQVTPAKREFNIRRKG</sequence>
<gene>
    <name type="ordered locus">Mhun_3016</name>
</gene>
<comment type="similarity">
    <text evidence="1">Belongs to the PDCD5 family.</text>
</comment>
<organism>
    <name type="scientific">Methanospirillum hungatei JF-1 (strain ATCC 27890 / DSM 864 / NBRC 100397 / JF-1)</name>
    <dbReference type="NCBI Taxonomy" id="323259"/>
    <lineage>
        <taxon>Archaea</taxon>
        <taxon>Methanobacteriati</taxon>
        <taxon>Methanobacteriota</taxon>
        <taxon>Stenosarchaea group</taxon>
        <taxon>Methanomicrobia</taxon>
        <taxon>Methanomicrobiales</taxon>
        <taxon>Methanospirillaceae</taxon>
        <taxon>Methanospirillum</taxon>
    </lineage>
</organism>
<accession>Q2FTJ7</accession>
<proteinExistence type="inferred from homology"/>
<evidence type="ECO:0000255" key="1">
    <source>
        <dbReference type="HAMAP-Rule" id="MF_00026"/>
    </source>
</evidence>